<dbReference type="EMBL" id="X68741">
    <property type="protein sequence ID" value="CAA48675.1"/>
    <property type="molecule type" value="mRNA"/>
</dbReference>
<dbReference type="PIR" id="PQ0490">
    <property type="entry name" value="S29925"/>
</dbReference>
<dbReference type="SMR" id="P30278"/>
<dbReference type="GO" id="GO:0016538">
    <property type="term" value="F:cyclin-dependent protein serine/threonine kinase regulator activity"/>
    <property type="evidence" value="ECO:0007669"/>
    <property type="project" value="InterPro"/>
</dbReference>
<dbReference type="GO" id="GO:0051301">
    <property type="term" value="P:cell division"/>
    <property type="evidence" value="ECO:0007669"/>
    <property type="project" value="UniProtKB-KW"/>
</dbReference>
<dbReference type="GO" id="GO:0044772">
    <property type="term" value="P:mitotic cell cycle phase transition"/>
    <property type="evidence" value="ECO:0007669"/>
    <property type="project" value="InterPro"/>
</dbReference>
<dbReference type="CDD" id="cd20567">
    <property type="entry name" value="CYCLIN_AtCycB-like_rpt1"/>
    <property type="match status" value="1"/>
</dbReference>
<dbReference type="CDD" id="cd20511">
    <property type="entry name" value="CYCLIN_AtCycB-like_rpt2"/>
    <property type="match status" value="1"/>
</dbReference>
<dbReference type="FunFam" id="1.10.472.10:FF:000032">
    <property type="entry name" value="G2/mitotic-specific cyclin-1"/>
    <property type="match status" value="1"/>
</dbReference>
<dbReference type="Gene3D" id="1.10.472.10">
    <property type="entry name" value="Cyclin-like"/>
    <property type="match status" value="2"/>
</dbReference>
<dbReference type="InterPro" id="IPR039361">
    <property type="entry name" value="Cyclin"/>
</dbReference>
<dbReference type="InterPro" id="IPR013763">
    <property type="entry name" value="Cyclin-like_dom"/>
</dbReference>
<dbReference type="InterPro" id="IPR036915">
    <property type="entry name" value="Cyclin-like_sf"/>
</dbReference>
<dbReference type="InterPro" id="IPR046965">
    <property type="entry name" value="Cyclin_A/B-like"/>
</dbReference>
<dbReference type="InterPro" id="IPR004367">
    <property type="entry name" value="Cyclin_C-dom"/>
</dbReference>
<dbReference type="InterPro" id="IPR006671">
    <property type="entry name" value="Cyclin_N"/>
</dbReference>
<dbReference type="InterPro" id="IPR048258">
    <property type="entry name" value="Cyclins_cyclin-box"/>
</dbReference>
<dbReference type="PANTHER" id="PTHR10177">
    <property type="entry name" value="CYCLINS"/>
    <property type="match status" value="1"/>
</dbReference>
<dbReference type="Pfam" id="PF02984">
    <property type="entry name" value="Cyclin_C"/>
    <property type="match status" value="1"/>
</dbReference>
<dbReference type="Pfam" id="PF00134">
    <property type="entry name" value="Cyclin_N"/>
    <property type="match status" value="1"/>
</dbReference>
<dbReference type="PIRSF" id="PIRSF001771">
    <property type="entry name" value="Cyclin_A_B_D_E"/>
    <property type="match status" value="1"/>
</dbReference>
<dbReference type="SMART" id="SM00385">
    <property type="entry name" value="CYCLIN"/>
    <property type="match status" value="2"/>
</dbReference>
<dbReference type="SMART" id="SM01332">
    <property type="entry name" value="Cyclin_C"/>
    <property type="match status" value="1"/>
</dbReference>
<dbReference type="SUPFAM" id="SSF47954">
    <property type="entry name" value="Cyclin-like"/>
    <property type="match status" value="2"/>
</dbReference>
<dbReference type="PROSITE" id="PS00292">
    <property type="entry name" value="CYCLINS"/>
    <property type="match status" value="1"/>
</dbReference>
<comment type="function">
    <text>Essential for the control of the cell cycle at the G2/M (mitosis) transition.</text>
</comment>
<comment type="subunit">
    <text>Interacts with the CDC2 protein kinase to form a serine/threonine kinase holoenzyme complex also known as maturation promoting factor (MPF). The cyclin subunit imparts substrate specificity to the complex.</text>
</comment>
<comment type="tissue specificity">
    <text>Only expressed in organs with dividing cells.</text>
</comment>
<comment type="developmental stage">
    <text>Accumulates steadily during G2 and is abruptly destroyed at mitosis.</text>
</comment>
<comment type="similarity">
    <text evidence="1">Belongs to the cyclin family. Cyclin AB subfamily.</text>
</comment>
<protein>
    <recommendedName>
        <fullName>G2/mitotic-specific cyclin-2</fullName>
    </recommendedName>
    <alternativeName>
        <fullName>B-like cyclin</fullName>
    </alternativeName>
    <alternativeName>
        <fullName>CycMs2</fullName>
    </alternativeName>
</protein>
<feature type="chain" id="PRO_0000080393" description="G2/mitotic-specific cyclin-2">
    <location>
        <begin position="1" status="less than"/>
        <end position="328"/>
    </location>
</feature>
<feature type="non-terminal residue">
    <location>
        <position position="1"/>
    </location>
</feature>
<name>CCNB2_MEDSA</name>
<evidence type="ECO:0000305" key="1"/>
<sequence>NSNEFGNFIAIDDELKLPEDQPEPMTLEHTEPMHSDPLEMEEVEMEDIEGEMILDIDSCDANNSLAVVEYIEDLHAYYRKIEYLGCVSPTYMDEQLDLNERMRAILVDWLIEVHDKFDLMQETLFLTVNLIDRFLAKQNVVRKKLQLVGLVAMLLACKYEEVSVPVVSDLIHIADRAYTRKDILEMEKLMLNTLQYNMSLPTAYVFMRRFLKAAQADKKLELVAFFLVDLSLVEYEMLKFPPSLVAAAAVYTAQCTVSGFKHWNKTCEWHTNYSEDQLLECSMLMVGFHQKAGAGKLTGVHRKYGSAKFSFTAKCEPACFLLENKNQP</sequence>
<keyword id="KW-0131">Cell cycle</keyword>
<keyword id="KW-0132">Cell division</keyword>
<keyword id="KW-0195">Cyclin</keyword>
<keyword id="KW-0498">Mitosis</keyword>
<organism>
    <name type="scientific">Medicago sativa</name>
    <name type="common">Alfalfa</name>
    <dbReference type="NCBI Taxonomy" id="3879"/>
    <lineage>
        <taxon>Eukaryota</taxon>
        <taxon>Viridiplantae</taxon>
        <taxon>Streptophyta</taxon>
        <taxon>Embryophyta</taxon>
        <taxon>Tracheophyta</taxon>
        <taxon>Spermatophyta</taxon>
        <taxon>Magnoliopsida</taxon>
        <taxon>eudicotyledons</taxon>
        <taxon>Gunneridae</taxon>
        <taxon>Pentapetalae</taxon>
        <taxon>rosids</taxon>
        <taxon>fabids</taxon>
        <taxon>Fabales</taxon>
        <taxon>Fabaceae</taxon>
        <taxon>Papilionoideae</taxon>
        <taxon>50 kb inversion clade</taxon>
        <taxon>NPAAA clade</taxon>
        <taxon>Hologalegina</taxon>
        <taxon>IRL clade</taxon>
        <taxon>Trifolieae</taxon>
        <taxon>Medicago</taxon>
    </lineage>
</organism>
<proteinExistence type="evidence at transcript level"/>
<accession>P30278</accession>
<reference key="1">
    <citation type="journal article" date="1992" name="Plant Cell">
        <title>Alfalfa cyclins: differential expression during the cell cycle and in plant organs.</title>
        <authorList>
            <person name="Hirt H."/>
            <person name="Mink M."/>
            <person name="Pfosser M."/>
            <person name="Boegre L."/>
            <person name="Gyoergyey J."/>
            <person name="Jonak C."/>
            <person name="Gartner A."/>
            <person name="Dudits D."/>
            <person name="Heberle-Bors E."/>
        </authorList>
    </citation>
    <scope>NUCLEOTIDE SEQUENCE [MRNA]</scope>
</reference>